<gene>
    <name type="primary">ZKSCAN3</name>
    <name type="synonym">ZFP47</name>
    <name type="synonym">ZNF306</name>
    <name type="synonym">ZNF309</name>
    <name type="synonym">ZSCAN13</name>
</gene>
<name>ZKSC3_HUMAN</name>
<accession>Q9BRR0</accession>
<accession>B2R8W2</accession>
<accession>B3KVC0</accession>
<accession>H7BXX1</accession>
<accession>Q5VXH3</accession>
<accession>Q92972</accession>
<accession>Q9H4T3</accession>
<keyword id="KW-0025">Alternative splicing</keyword>
<keyword id="KW-0072">Autophagy</keyword>
<keyword id="KW-0963">Cytoplasm</keyword>
<keyword id="KW-0238">DNA-binding</keyword>
<keyword id="KW-1017">Isopeptide bond</keyword>
<keyword id="KW-0479">Metal-binding</keyword>
<keyword id="KW-0539">Nucleus</keyword>
<keyword id="KW-0597">Phosphoprotein</keyword>
<keyword id="KW-1267">Proteomics identification</keyword>
<keyword id="KW-1185">Reference proteome</keyword>
<keyword id="KW-0677">Repeat</keyword>
<keyword id="KW-0678">Repressor</keyword>
<keyword id="KW-0804">Transcription</keyword>
<keyword id="KW-0805">Transcription regulation</keyword>
<keyword id="KW-0832">Ubl conjugation</keyword>
<keyword id="KW-0862">Zinc</keyword>
<keyword id="KW-0863">Zinc-finger</keyword>
<evidence type="ECO:0000250" key="1">
    <source>
        <dbReference type="UniProtKB" id="Q91VW9"/>
    </source>
</evidence>
<evidence type="ECO:0000255" key="2">
    <source>
        <dbReference type="PROSITE-ProRule" id="PRU00042"/>
    </source>
</evidence>
<evidence type="ECO:0000255" key="3">
    <source>
        <dbReference type="PROSITE-ProRule" id="PRU00187"/>
    </source>
</evidence>
<evidence type="ECO:0000256" key="4">
    <source>
        <dbReference type="SAM" id="MobiDB-lite"/>
    </source>
</evidence>
<evidence type="ECO:0000269" key="5">
    <source>
    </source>
</evidence>
<evidence type="ECO:0000269" key="6">
    <source>
    </source>
</evidence>
<evidence type="ECO:0000269" key="7">
    <source>
    </source>
</evidence>
<evidence type="ECO:0000269" key="8">
    <source>
    </source>
</evidence>
<evidence type="ECO:0000269" key="9">
    <source>
    </source>
</evidence>
<evidence type="ECO:0000269" key="10">
    <source>
    </source>
</evidence>
<evidence type="ECO:0000269" key="11">
    <source ref="1"/>
</evidence>
<evidence type="ECO:0000303" key="12">
    <source>
    </source>
</evidence>
<evidence type="ECO:0000305" key="13"/>
<evidence type="ECO:0007744" key="14">
    <source>
    </source>
</evidence>
<evidence type="ECO:0007744" key="15">
    <source>
    </source>
</evidence>
<proteinExistence type="evidence at protein level"/>
<feature type="chain" id="PRO_0000047524" description="Zinc finger protein with KRAB and SCAN domains 3">
    <location>
        <begin position="1"/>
        <end position="538"/>
    </location>
</feature>
<feature type="domain" description="SCAN box" evidence="3">
    <location>
        <begin position="46"/>
        <end position="128"/>
    </location>
</feature>
<feature type="domain" description="KRAB">
    <location>
        <begin position="214"/>
        <end position="274"/>
    </location>
</feature>
<feature type="zinc finger region" description="C2H2-type 1" evidence="2">
    <location>
        <begin position="314"/>
        <end position="336"/>
    </location>
</feature>
<feature type="zinc finger region" description="C2H2-type 2" evidence="2">
    <location>
        <begin position="342"/>
        <end position="364"/>
    </location>
</feature>
<feature type="zinc finger region" description="C2H2-type 3" evidence="2">
    <location>
        <begin position="370"/>
        <end position="392"/>
    </location>
</feature>
<feature type="zinc finger region" description="C2H2-type 4" evidence="2">
    <location>
        <begin position="398"/>
        <end position="420"/>
    </location>
</feature>
<feature type="zinc finger region" description="C2H2-type 5" evidence="2">
    <location>
        <begin position="426"/>
        <end position="448"/>
    </location>
</feature>
<feature type="zinc finger region" description="C2H2-type 6" evidence="2">
    <location>
        <begin position="480"/>
        <end position="502"/>
    </location>
</feature>
<feature type="zinc finger region" description="C2H2-type 7" evidence="2">
    <location>
        <begin position="508"/>
        <end position="530"/>
    </location>
</feature>
<feature type="region of interest" description="Disordered" evidence="4">
    <location>
        <begin position="226"/>
        <end position="274"/>
    </location>
</feature>
<feature type="compositionally biased region" description="Polar residues" evidence="4">
    <location>
        <begin position="226"/>
        <end position="236"/>
    </location>
</feature>
<feature type="compositionally biased region" description="Basic and acidic residues" evidence="4">
    <location>
        <begin position="253"/>
        <end position="274"/>
    </location>
</feature>
<feature type="modified residue" description="Phosphoserine" evidence="1">
    <location>
        <position position="42"/>
    </location>
</feature>
<feature type="modified residue" description="Phosphothreonine" evidence="14">
    <location>
        <position position="207"/>
    </location>
</feature>
<feature type="modified residue" description="Phosphothreonine" evidence="14">
    <location>
        <position position="449"/>
    </location>
</feature>
<feature type="cross-link" description="Glycyl lysine isopeptide (Lys-Gly) (interchain with G-Cter in SUMO2)" evidence="15">
    <location>
        <position position="171"/>
    </location>
</feature>
<feature type="splice variant" id="VSP_045908" description="In isoform 2." evidence="12">
    <location>
        <begin position="1"/>
        <end position="148"/>
    </location>
</feature>
<feature type="sequence variant" id="VAR_024208" description="In dbSNP:rs733743.">
    <original>R</original>
    <variation>T</variation>
    <location>
        <position position="3"/>
    </location>
</feature>
<feature type="sequence variant" id="VAR_028313" description="In dbSNP:rs3857554.">
    <original>G</original>
    <variation>V</variation>
    <location>
        <position position="33"/>
    </location>
</feature>
<feature type="sequence variant" id="VAR_028314" description="In dbSNP:rs3857555.">
    <original>F</original>
    <variation>L</variation>
    <location>
        <position position="34"/>
    </location>
</feature>
<feature type="sequence variant" id="VAR_028315" description="In dbSNP:rs17856167." evidence="11">
    <original>V</original>
    <variation>M</variation>
    <location>
        <position position="189"/>
    </location>
</feature>
<feature type="sequence variant" id="VAR_059950" description="Requires 2 nucleotide substitutions; dbSNP:rs371085669." evidence="5 6 11">
    <original>K</original>
    <variation>A</variation>
    <location>
        <position position="200"/>
    </location>
</feature>
<feature type="sequence variant" id="VAR_028316" description="In dbSNP:rs13201752." evidence="5">
    <original>K</original>
    <variation>E</variation>
    <location>
        <position position="200"/>
    </location>
</feature>
<feature type="sequence variant" id="VAR_028317" description="In dbSNP:rs13201753.">
    <original>K</original>
    <variation>T</variation>
    <location>
        <position position="200"/>
    </location>
</feature>
<feature type="sequence variant" id="VAR_028318" description="In dbSNP:rs213227.">
    <original>H</original>
    <variation>Q</variation>
    <location>
        <position position="246"/>
    </location>
</feature>
<feature type="sequence conflict" description="In Ref. 6; AAB16813." evidence="13" ref="6">
    <original>LT</original>
    <variation>IP</variation>
    <location>
        <begin position="206"/>
        <end position="207"/>
    </location>
</feature>
<feature type="sequence conflict" description="In Ref. 6; AAB16813." evidence="13" ref="6">
    <original>GKA</original>
    <variation>AKP</variation>
    <location>
        <begin position="348"/>
        <end position="350"/>
    </location>
</feature>
<feature type="sequence conflict" description="In Ref. 6; AAB16813." evidence="13" ref="6">
    <original>R</original>
    <variation>D</variation>
    <location>
        <position position="437"/>
    </location>
</feature>
<feature type="sequence conflict" description="In Ref. 6; AAB16813." evidence="13" ref="6">
    <original>QGEAWKSRMESQLENVETPMS</original>
    <variation>TGRGWKVGWKASWKMLKLPCP</variation>
    <location>
        <begin position="459"/>
        <end position="479"/>
    </location>
</feature>
<dbReference type="EMBL" id="BT007427">
    <property type="protein sequence ID" value="AAP36095.1"/>
    <property type="molecule type" value="mRNA"/>
</dbReference>
<dbReference type="EMBL" id="AK122790">
    <property type="protein sequence ID" value="BAG53732.1"/>
    <property type="molecule type" value="mRNA"/>
</dbReference>
<dbReference type="EMBL" id="AK313532">
    <property type="protein sequence ID" value="BAG36309.1"/>
    <property type="molecule type" value="mRNA"/>
</dbReference>
<dbReference type="EMBL" id="AL358785">
    <property type="status" value="NOT_ANNOTATED_CDS"/>
    <property type="molecule type" value="Genomic_DNA"/>
</dbReference>
<dbReference type="EMBL" id="AL021997">
    <property type="status" value="NOT_ANNOTATED_CDS"/>
    <property type="molecule type" value="Genomic_DNA"/>
</dbReference>
<dbReference type="EMBL" id="CH471081">
    <property type="protein sequence ID" value="EAX03157.1"/>
    <property type="molecule type" value="Genomic_DNA"/>
</dbReference>
<dbReference type="EMBL" id="BC006118">
    <property type="protein sequence ID" value="AAH06118.1"/>
    <property type="molecule type" value="mRNA"/>
</dbReference>
<dbReference type="EMBL" id="U71601">
    <property type="protein sequence ID" value="AAB16813.1"/>
    <property type="molecule type" value="mRNA"/>
</dbReference>
<dbReference type="CCDS" id="CCDS4650.1">
    <molecule id="Q9BRR0-1"/>
</dbReference>
<dbReference type="CCDS" id="CCDS56408.1">
    <molecule id="Q9BRR0-2"/>
</dbReference>
<dbReference type="RefSeq" id="NP_001229823.1">
    <molecule id="Q9BRR0-1"/>
    <property type="nucleotide sequence ID" value="NM_001242894.2"/>
</dbReference>
<dbReference type="RefSeq" id="NP_001229824.1">
    <molecule id="Q9BRR0-2"/>
    <property type="nucleotide sequence ID" value="NM_001242895.2"/>
</dbReference>
<dbReference type="RefSeq" id="NP_077819.2">
    <molecule id="Q9BRR0-1"/>
    <property type="nucleotide sequence ID" value="NM_024493.4"/>
</dbReference>
<dbReference type="RefSeq" id="XP_006715278.1">
    <molecule id="Q9BRR0-1"/>
    <property type="nucleotide sequence ID" value="XM_006715215.3"/>
</dbReference>
<dbReference type="RefSeq" id="XP_006715281.1">
    <molecule id="Q9BRR0-2"/>
    <property type="nucleotide sequence ID" value="XM_006715218.4"/>
</dbReference>
<dbReference type="RefSeq" id="XP_047275329.1">
    <molecule id="Q9BRR0-1"/>
    <property type="nucleotide sequence ID" value="XM_047419373.1"/>
</dbReference>
<dbReference type="RefSeq" id="XP_047275332.1">
    <molecule id="Q9BRR0-2"/>
    <property type="nucleotide sequence ID" value="XM_047419376.1"/>
</dbReference>
<dbReference type="SMR" id="Q9BRR0"/>
<dbReference type="BioGRID" id="123230">
    <property type="interactions" value="29"/>
</dbReference>
<dbReference type="FunCoup" id="Q9BRR0">
    <property type="interactions" value="1528"/>
</dbReference>
<dbReference type="IntAct" id="Q9BRR0">
    <property type="interactions" value="46"/>
</dbReference>
<dbReference type="STRING" id="9606.ENSP00000366465"/>
<dbReference type="iPTMnet" id="Q9BRR0"/>
<dbReference type="PhosphoSitePlus" id="Q9BRR0"/>
<dbReference type="BioMuta" id="ZKSCAN3"/>
<dbReference type="DMDM" id="116242859"/>
<dbReference type="jPOST" id="Q9BRR0"/>
<dbReference type="MassIVE" id="Q9BRR0"/>
<dbReference type="PaxDb" id="9606-ENSP00000366465"/>
<dbReference type="PeptideAtlas" id="Q9BRR0"/>
<dbReference type="ProteomicsDB" id="43426"/>
<dbReference type="ProteomicsDB" id="78810">
    <molecule id="Q9BRR0-1"/>
</dbReference>
<dbReference type="Pumba" id="Q9BRR0"/>
<dbReference type="Antibodypedia" id="11260">
    <property type="antibodies" value="163 antibodies from 26 providers"/>
</dbReference>
<dbReference type="DNASU" id="80317"/>
<dbReference type="Ensembl" id="ENST00000252211.7">
    <molecule id="Q9BRR0-1"/>
    <property type="protein sequence ID" value="ENSP00000252211.2"/>
    <property type="gene ID" value="ENSG00000189298.14"/>
</dbReference>
<dbReference type="Ensembl" id="ENST00000341464.9">
    <molecule id="Q9BRR0-2"/>
    <property type="protein sequence ID" value="ENSP00000341883.5"/>
    <property type="gene ID" value="ENSG00000189298.14"/>
</dbReference>
<dbReference type="Ensembl" id="ENST00000377255.3">
    <molecule id="Q9BRR0-1"/>
    <property type="protein sequence ID" value="ENSP00000366465.1"/>
    <property type="gene ID" value="ENSG00000189298.14"/>
</dbReference>
<dbReference type="GeneID" id="80317"/>
<dbReference type="KEGG" id="hsa:80317"/>
<dbReference type="MANE-Select" id="ENST00000252211.7">
    <property type="protein sequence ID" value="ENSP00000252211.2"/>
    <property type="RefSeq nucleotide sequence ID" value="NM_024493.4"/>
    <property type="RefSeq protein sequence ID" value="NP_077819.2"/>
</dbReference>
<dbReference type="UCSC" id="uc003nle.4">
    <molecule id="Q9BRR0-1"/>
    <property type="organism name" value="human"/>
</dbReference>
<dbReference type="AGR" id="HGNC:13853"/>
<dbReference type="CTD" id="80317"/>
<dbReference type="DisGeNET" id="80317"/>
<dbReference type="GeneCards" id="ZKSCAN3"/>
<dbReference type="HGNC" id="HGNC:13853">
    <property type="gene designation" value="ZKSCAN3"/>
</dbReference>
<dbReference type="HPA" id="ENSG00000189298">
    <property type="expression patterns" value="Low tissue specificity"/>
</dbReference>
<dbReference type="MIM" id="612791">
    <property type="type" value="gene"/>
</dbReference>
<dbReference type="neXtProt" id="NX_Q9BRR0"/>
<dbReference type="OpenTargets" id="ENSG00000189298"/>
<dbReference type="PharmGKB" id="PA37821"/>
<dbReference type="VEuPathDB" id="HostDB:ENSG00000189298"/>
<dbReference type="eggNOG" id="KOG1721">
    <property type="taxonomic scope" value="Eukaryota"/>
</dbReference>
<dbReference type="GeneTree" id="ENSGT00940000163682"/>
<dbReference type="HOGENOM" id="CLU_002678_49_4_1"/>
<dbReference type="InParanoid" id="Q9BRR0"/>
<dbReference type="OMA" id="QELPCCK"/>
<dbReference type="OrthoDB" id="654211at2759"/>
<dbReference type="PAN-GO" id="Q9BRR0">
    <property type="GO annotations" value="3 GO annotations based on evolutionary models"/>
</dbReference>
<dbReference type="PhylomeDB" id="Q9BRR0"/>
<dbReference type="TreeFam" id="TF350830"/>
<dbReference type="PathwayCommons" id="Q9BRR0"/>
<dbReference type="Reactome" id="R-HSA-212436">
    <property type="pathway name" value="Generic Transcription Pathway"/>
</dbReference>
<dbReference type="SignaLink" id="Q9BRR0"/>
<dbReference type="BioGRID-ORCS" id="80317">
    <property type="hits" value="12 hits in 1178 CRISPR screens"/>
</dbReference>
<dbReference type="ChiTaRS" id="ZKSCAN3">
    <property type="organism name" value="human"/>
</dbReference>
<dbReference type="GenomeRNAi" id="80317"/>
<dbReference type="Pharos" id="Q9BRR0">
    <property type="development level" value="Tbio"/>
</dbReference>
<dbReference type="PRO" id="PR:Q9BRR0"/>
<dbReference type="Proteomes" id="UP000005640">
    <property type="component" value="Chromosome 6"/>
</dbReference>
<dbReference type="RNAct" id="Q9BRR0">
    <property type="molecule type" value="protein"/>
</dbReference>
<dbReference type="Bgee" id="ENSG00000189298">
    <property type="expression patterns" value="Expressed in primordial germ cell in gonad and 128 other cell types or tissues"/>
</dbReference>
<dbReference type="GO" id="GO:0005737">
    <property type="term" value="C:cytoplasm"/>
    <property type="evidence" value="ECO:0000314"/>
    <property type="project" value="UniProtKB"/>
</dbReference>
<dbReference type="GO" id="GO:0005654">
    <property type="term" value="C:nucleoplasm"/>
    <property type="evidence" value="ECO:0000314"/>
    <property type="project" value="HPA"/>
</dbReference>
<dbReference type="GO" id="GO:0005634">
    <property type="term" value="C:nucleus"/>
    <property type="evidence" value="ECO:0000314"/>
    <property type="project" value="UniProtKB"/>
</dbReference>
<dbReference type="GO" id="GO:0003682">
    <property type="term" value="F:chromatin binding"/>
    <property type="evidence" value="ECO:0000314"/>
    <property type="project" value="UniProtKB"/>
</dbReference>
<dbReference type="GO" id="GO:0003677">
    <property type="term" value="F:DNA binding"/>
    <property type="evidence" value="ECO:0000314"/>
    <property type="project" value="UniProtKB"/>
</dbReference>
<dbReference type="GO" id="GO:0003700">
    <property type="term" value="F:DNA-binding transcription factor activity"/>
    <property type="evidence" value="ECO:0000314"/>
    <property type="project" value="UniProtKB"/>
</dbReference>
<dbReference type="GO" id="GO:0000981">
    <property type="term" value="F:DNA-binding transcription factor activity, RNA polymerase II-specific"/>
    <property type="evidence" value="ECO:0000318"/>
    <property type="project" value="GO_Central"/>
</dbReference>
<dbReference type="GO" id="GO:0001227">
    <property type="term" value="F:DNA-binding transcription repressor activity, RNA polymerase II-specific"/>
    <property type="evidence" value="ECO:0000314"/>
    <property type="project" value="NTNU_SB"/>
</dbReference>
<dbReference type="GO" id="GO:0000978">
    <property type="term" value="F:RNA polymerase II cis-regulatory region sequence-specific DNA binding"/>
    <property type="evidence" value="ECO:0000314"/>
    <property type="project" value="NTNU_SB"/>
</dbReference>
<dbReference type="GO" id="GO:0043565">
    <property type="term" value="F:sequence-specific DNA binding"/>
    <property type="evidence" value="ECO:0000314"/>
    <property type="project" value="UniProtKB"/>
</dbReference>
<dbReference type="GO" id="GO:0008270">
    <property type="term" value="F:zinc ion binding"/>
    <property type="evidence" value="ECO:0007669"/>
    <property type="project" value="UniProtKB-KW"/>
</dbReference>
<dbReference type="GO" id="GO:0006914">
    <property type="term" value="P:autophagy"/>
    <property type="evidence" value="ECO:0007669"/>
    <property type="project" value="UniProtKB-KW"/>
</dbReference>
<dbReference type="GO" id="GO:0007040">
    <property type="term" value="P:lysosome organization"/>
    <property type="evidence" value="ECO:0000315"/>
    <property type="project" value="UniProtKB"/>
</dbReference>
<dbReference type="GO" id="GO:0010507">
    <property type="term" value="P:negative regulation of autophagy"/>
    <property type="evidence" value="ECO:0000315"/>
    <property type="project" value="UniProtKB"/>
</dbReference>
<dbReference type="GO" id="GO:2000773">
    <property type="term" value="P:negative regulation of cellular senescence"/>
    <property type="evidence" value="ECO:0000315"/>
    <property type="project" value="UniProtKB"/>
</dbReference>
<dbReference type="GO" id="GO:0045892">
    <property type="term" value="P:negative regulation of DNA-templated transcription"/>
    <property type="evidence" value="ECO:0000314"/>
    <property type="project" value="UniProtKB"/>
</dbReference>
<dbReference type="GO" id="GO:0000122">
    <property type="term" value="P:negative regulation of transcription by RNA polymerase II"/>
    <property type="evidence" value="ECO:0000314"/>
    <property type="project" value="NTNU_SB"/>
</dbReference>
<dbReference type="GO" id="GO:0045893">
    <property type="term" value="P:positive regulation of DNA-templated transcription"/>
    <property type="evidence" value="ECO:0000314"/>
    <property type="project" value="UniProtKB"/>
</dbReference>
<dbReference type="GO" id="GO:0006357">
    <property type="term" value="P:regulation of transcription by RNA polymerase II"/>
    <property type="evidence" value="ECO:0000318"/>
    <property type="project" value="GO_Central"/>
</dbReference>
<dbReference type="CDD" id="cd07765">
    <property type="entry name" value="KRAB_A-box"/>
    <property type="match status" value="1"/>
</dbReference>
<dbReference type="CDD" id="cd07936">
    <property type="entry name" value="SCAN"/>
    <property type="match status" value="1"/>
</dbReference>
<dbReference type="FunFam" id="3.30.160.60:FF:000824">
    <property type="entry name" value="Zinc finger protein 184"/>
    <property type="match status" value="1"/>
</dbReference>
<dbReference type="FunFam" id="1.10.4020.10:FF:000001">
    <property type="entry name" value="zinc finger protein 263 isoform X1"/>
    <property type="match status" value="1"/>
</dbReference>
<dbReference type="FunFam" id="3.30.160.60:FF:002343">
    <property type="entry name" value="Zinc finger protein 33A"/>
    <property type="match status" value="1"/>
</dbReference>
<dbReference type="FunFam" id="3.30.160.60:FF:002254">
    <property type="entry name" value="Zinc finger protein 540"/>
    <property type="match status" value="1"/>
</dbReference>
<dbReference type="FunFam" id="3.30.160.60:FF:000642">
    <property type="entry name" value="Zinc finger with KRAB and SCAN domains 2"/>
    <property type="match status" value="1"/>
</dbReference>
<dbReference type="FunFam" id="3.30.160.60:FF:001214">
    <property type="entry name" value="Zinc finger with KRAB and SCAN domains 4"/>
    <property type="match status" value="1"/>
</dbReference>
<dbReference type="FunFam" id="3.30.160.60:FF:001333">
    <property type="entry name" value="Zinc finger with KRAB and SCAN domains 4"/>
    <property type="match status" value="1"/>
</dbReference>
<dbReference type="FunFam" id="3.30.160.60:FF:001518">
    <property type="entry name" value="Zinc finger with KRAB and SCAN domains 4"/>
    <property type="match status" value="1"/>
</dbReference>
<dbReference type="Gene3D" id="6.10.140.140">
    <property type="match status" value="1"/>
</dbReference>
<dbReference type="Gene3D" id="3.30.160.60">
    <property type="entry name" value="Classic Zinc Finger"/>
    <property type="match status" value="7"/>
</dbReference>
<dbReference type="Gene3D" id="1.10.4020.10">
    <property type="entry name" value="DNA breaking-rejoining enzymes"/>
    <property type="match status" value="1"/>
</dbReference>
<dbReference type="InterPro" id="IPR001909">
    <property type="entry name" value="KRAB"/>
</dbReference>
<dbReference type="InterPro" id="IPR036051">
    <property type="entry name" value="KRAB_dom_sf"/>
</dbReference>
<dbReference type="InterPro" id="IPR003309">
    <property type="entry name" value="SCAN_dom"/>
</dbReference>
<dbReference type="InterPro" id="IPR038269">
    <property type="entry name" value="SCAN_sf"/>
</dbReference>
<dbReference type="InterPro" id="IPR036236">
    <property type="entry name" value="Znf_C2H2_sf"/>
</dbReference>
<dbReference type="InterPro" id="IPR013087">
    <property type="entry name" value="Znf_C2H2_type"/>
</dbReference>
<dbReference type="PANTHER" id="PTHR24393:SF143">
    <property type="entry name" value="ENDOTHELIAL ZINC FINGER PROTEIN INDUCED BY TUMOR NECROSIS FACTOR ALPHA"/>
    <property type="match status" value="1"/>
</dbReference>
<dbReference type="PANTHER" id="PTHR24393">
    <property type="entry name" value="ZINC FINGER PROTEIN"/>
    <property type="match status" value="1"/>
</dbReference>
<dbReference type="Pfam" id="PF01352">
    <property type="entry name" value="KRAB"/>
    <property type="match status" value="1"/>
</dbReference>
<dbReference type="Pfam" id="PF02023">
    <property type="entry name" value="SCAN"/>
    <property type="match status" value="1"/>
</dbReference>
<dbReference type="Pfam" id="PF00096">
    <property type="entry name" value="zf-C2H2"/>
    <property type="match status" value="7"/>
</dbReference>
<dbReference type="SMART" id="SM00349">
    <property type="entry name" value="KRAB"/>
    <property type="match status" value="1"/>
</dbReference>
<dbReference type="SMART" id="SM00431">
    <property type="entry name" value="SCAN"/>
    <property type="match status" value="1"/>
</dbReference>
<dbReference type="SMART" id="SM00355">
    <property type="entry name" value="ZnF_C2H2"/>
    <property type="match status" value="7"/>
</dbReference>
<dbReference type="SUPFAM" id="SSF57667">
    <property type="entry name" value="beta-beta-alpha zinc fingers"/>
    <property type="match status" value="4"/>
</dbReference>
<dbReference type="SUPFAM" id="SSF109640">
    <property type="entry name" value="KRAB domain (Kruppel-associated box)"/>
    <property type="match status" value="1"/>
</dbReference>
<dbReference type="SUPFAM" id="SSF47353">
    <property type="entry name" value="Retrovirus capsid dimerization domain-like"/>
    <property type="match status" value="1"/>
</dbReference>
<dbReference type="PROSITE" id="PS50804">
    <property type="entry name" value="SCAN_BOX"/>
    <property type="match status" value="1"/>
</dbReference>
<dbReference type="PROSITE" id="PS00028">
    <property type="entry name" value="ZINC_FINGER_C2H2_1"/>
    <property type="match status" value="7"/>
</dbReference>
<dbReference type="PROSITE" id="PS50157">
    <property type="entry name" value="ZINC_FINGER_C2H2_2"/>
    <property type="match status" value="7"/>
</dbReference>
<organism>
    <name type="scientific">Homo sapiens</name>
    <name type="common">Human</name>
    <dbReference type="NCBI Taxonomy" id="9606"/>
    <lineage>
        <taxon>Eukaryota</taxon>
        <taxon>Metazoa</taxon>
        <taxon>Chordata</taxon>
        <taxon>Craniata</taxon>
        <taxon>Vertebrata</taxon>
        <taxon>Euteleostomi</taxon>
        <taxon>Mammalia</taxon>
        <taxon>Eutheria</taxon>
        <taxon>Euarchontoglires</taxon>
        <taxon>Primates</taxon>
        <taxon>Haplorrhini</taxon>
        <taxon>Catarrhini</taxon>
        <taxon>Hominidae</taxon>
        <taxon>Homo</taxon>
    </lineage>
</organism>
<reference key="1">
    <citation type="submission" date="2003-05" db="EMBL/GenBank/DDBJ databases">
        <title>Cloning of human full-length CDSs in BD Creator(TM) system donor vector.</title>
        <authorList>
            <person name="Kalnine N."/>
            <person name="Chen X."/>
            <person name="Rolfs A."/>
            <person name="Halleck A."/>
            <person name="Hines L."/>
            <person name="Eisenstein S."/>
            <person name="Koundinya M."/>
            <person name="Raphael J."/>
            <person name="Moreira D."/>
            <person name="Kelley T."/>
            <person name="LaBaer J."/>
            <person name="Lin Y."/>
            <person name="Phelan M."/>
            <person name="Farmer A."/>
        </authorList>
    </citation>
    <scope>NUCLEOTIDE SEQUENCE [LARGE SCALE MRNA] (ISOFORM 1)</scope>
    <scope>VARIANTS MET-189 AND ALA-200</scope>
</reference>
<reference key="2">
    <citation type="journal article" date="2004" name="Nat. Genet.">
        <title>Complete sequencing and characterization of 21,243 full-length human cDNAs.</title>
        <authorList>
            <person name="Ota T."/>
            <person name="Suzuki Y."/>
            <person name="Nishikawa T."/>
            <person name="Otsuki T."/>
            <person name="Sugiyama T."/>
            <person name="Irie R."/>
            <person name="Wakamatsu A."/>
            <person name="Hayashi K."/>
            <person name="Sato H."/>
            <person name="Nagai K."/>
            <person name="Kimura K."/>
            <person name="Makita H."/>
            <person name="Sekine M."/>
            <person name="Obayashi M."/>
            <person name="Nishi T."/>
            <person name="Shibahara T."/>
            <person name="Tanaka T."/>
            <person name="Ishii S."/>
            <person name="Yamamoto J."/>
            <person name="Saito K."/>
            <person name="Kawai Y."/>
            <person name="Isono Y."/>
            <person name="Nakamura Y."/>
            <person name="Nagahari K."/>
            <person name="Murakami K."/>
            <person name="Yasuda T."/>
            <person name="Iwayanagi T."/>
            <person name="Wagatsuma M."/>
            <person name="Shiratori A."/>
            <person name="Sudo H."/>
            <person name="Hosoiri T."/>
            <person name="Kaku Y."/>
            <person name="Kodaira H."/>
            <person name="Kondo H."/>
            <person name="Sugawara M."/>
            <person name="Takahashi M."/>
            <person name="Kanda K."/>
            <person name="Yokoi T."/>
            <person name="Furuya T."/>
            <person name="Kikkawa E."/>
            <person name="Omura Y."/>
            <person name="Abe K."/>
            <person name="Kamihara K."/>
            <person name="Katsuta N."/>
            <person name="Sato K."/>
            <person name="Tanikawa M."/>
            <person name="Yamazaki M."/>
            <person name="Ninomiya K."/>
            <person name="Ishibashi T."/>
            <person name="Yamashita H."/>
            <person name="Murakawa K."/>
            <person name="Fujimori K."/>
            <person name="Tanai H."/>
            <person name="Kimata M."/>
            <person name="Watanabe M."/>
            <person name="Hiraoka S."/>
            <person name="Chiba Y."/>
            <person name="Ishida S."/>
            <person name="Ono Y."/>
            <person name="Takiguchi S."/>
            <person name="Watanabe S."/>
            <person name="Yosida M."/>
            <person name="Hotuta T."/>
            <person name="Kusano J."/>
            <person name="Kanehori K."/>
            <person name="Takahashi-Fujii A."/>
            <person name="Hara H."/>
            <person name="Tanase T.-O."/>
            <person name="Nomura Y."/>
            <person name="Togiya S."/>
            <person name="Komai F."/>
            <person name="Hara R."/>
            <person name="Takeuchi K."/>
            <person name="Arita M."/>
            <person name="Imose N."/>
            <person name="Musashino K."/>
            <person name="Yuuki H."/>
            <person name="Oshima A."/>
            <person name="Sasaki N."/>
            <person name="Aotsuka S."/>
            <person name="Yoshikawa Y."/>
            <person name="Matsunawa H."/>
            <person name="Ichihara T."/>
            <person name="Shiohata N."/>
            <person name="Sano S."/>
            <person name="Moriya S."/>
            <person name="Momiyama H."/>
            <person name="Satoh N."/>
            <person name="Takami S."/>
            <person name="Terashima Y."/>
            <person name="Suzuki O."/>
            <person name="Nakagawa S."/>
            <person name="Senoh A."/>
            <person name="Mizoguchi H."/>
            <person name="Goto Y."/>
            <person name="Shimizu F."/>
            <person name="Wakebe H."/>
            <person name="Hishigaki H."/>
            <person name="Watanabe T."/>
            <person name="Sugiyama A."/>
            <person name="Takemoto M."/>
            <person name="Kawakami B."/>
            <person name="Yamazaki M."/>
            <person name="Watanabe K."/>
            <person name="Kumagai A."/>
            <person name="Itakura S."/>
            <person name="Fukuzumi Y."/>
            <person name="Fujimori Y."/>
            <person name="Komiyama M."/>
            <person name="Tashiro H."/>
            <person name="Tanigami A."/>
            <person name="Fujiwara T."/>
            <person name="Ono T."/>
            <person name="Yamada K."/>
            <person name="Fujii Y."/>
            <person name="Ozaki K."/>
            <person name="Hirao M."/>
            <person name="Ohmori Y."/>
            <person name="Kawabata A."/>
            <person name="Hikiji T."/>
            <person name="Kobatake N."/>
            <person name="Inagaki H."/>
            <person name="Ikema Y."/>
            <person name="Okamoto S."/>
            <person name="Okitani R."/>
            <person name="Kawakami T."/>
            <person name="Noguchi S."/>
            <person name="Itoh T."/>
            <person name="Shigeta K."/>
            <person name="Senba T."/>
            <person name="Matsumura K."/>
            <person name="Nakajima Y."/>
            <person name="Mizuno T."/>
            <person name="Morinaga M."/>
            <person name="Sasaki M."/>
            <person name="Togashi T."/>
            <person name="Oyama M."/>
            <person name="Hata H."/>
            <person name="Watanabe M."/>
            <person name="Komatsu T."/>
            <person name="Mizushima-Sugano J."/>
            <person name="Satoh T."/>
            <person name="Shirai Y."/>
            <person name="Takahashi Y."/>
            <person name="Nakagawa K."/>
            <person name="Okumura K."/>
            <person name="Nagase T."/>
            <person name="Nomura N."/>
            <person name="Kikuchi H."/>
            <person name="Masuho Y."/>
            <person name="Yamashita R."/>
            <person name="Nakai K."/>
            <person name="Yada T."/>
            <person name="Nakamura Y."/>
            <person name="Ohara O."/>
            <person name="Isogai T."/>
            <person name="Sugano S."/>
        </authorList>
    </citation>
    <scope>NUCLEOTIDE SEQUENCE [LARGE SCALE MRNA] (ISOFORMS 1 AND 2)</scope>
    <scope>VARIANTS ALA-200 AND GLU-200</scope>
    <source>
        <tissue>Testis</tissue>
    </source>
</reference>
<reference key="3">
    <citation type="journal article" date="2003" name="Nature">
        <title>The DNA sequence and analysis of human chromosome 6.</title>
        <authorList>
            <person name="Mungall A.J."/>
            <person name="Palmer S.A."/>
            <person name="Sims S.K."/>
            <person name="Edwards C.A."/>
            <person name="Ashurst J.L."/>
            <person name="Wilming L."/>
            <person name="Jones M.C."/>
            <person name="Horton R."/>
            <person name="Hunt S.E."/>
            <person name="Scott C.E."/>
            <person name="Gilbert J.G.R."/>
            <person name="Clamp M.E."/>
            <person name="Bethel G."/>
            <person name="Milne S."/>
            <person name="Ainscough R."/>
            <person name="Almeida J.P."/>
            <person name="Ambrose K.D."/>
            <person name="Andrews T.D."/>
            <person name="Ashwell R.I.S."/>
            <person name="Babbage A.K."/>
            <person name="Bagguley C.L."/>
            <person name="Bailey J."/>
            <person name="Banerjee R."/>
            <person name="Barker D.J."/>
            <person name="Barlow K.F."/>
            <person name="Bates K."/>
            <person name="Beare D.M."/>
            <person name="Beasley H."/>
            <person name="Beasley O."/>
            <person name="Bird C.P."/>
            <person name="Blakey S.E."/>
            <person name="Bray-Allen S."/>
            <person name="Brook J."/>
            <person name="Brown A.J."/>
            <person name="Brown J.Y."/>
            <person name="Burford D.C."/>
            <person name="Burrill W."/>
            <person name="Burton J."/>
            <person name="Carder C."/>
            <person name="Carter N.P."/>
            <person name="Chapman J.C."/>
            <person name="Clark S.Y."/>
            <person name="Clark G."/>
            <person name="Clee C.M."/>
            <person name="Clegg S."/>
            <person name="Cobley V."/>
            <person name="Collier R.E."/>
            <person name="Collins J.E."/>
            <person name="Colman L.K."/>
            <person name="Corby N.R."/>
            <person name="Coville G.J."/>
            <person name="Culley K.M."/>
            <person name="Dhami P."/>
            <person name="Davies J."/>
            <person name="Dunn M."/>
            <person name="Earthrowl M.E."/>
            <person name="Ellington A.E."/>
            <person name="Evans K.A."/>
            <person name="Faulkner L."/>
            <person name="Francis M.D."/>
            <person name="Frankish A."/>
            <person name="Frankland J."/>
            <person name="French L."/>
            <person name="Garner P."/>
            <person name="Garnett J."/>
            <person name="Ghori M.J."/>
            <person name="Gilby L.M."/>
            <person name="Gillson C.J."/>
            <person name="Glithero R.J."/>
            <person name="Grafham D.V."/>
            <person name="Grant M."/>
            <person name="Gribble S."/>
            <person name="Griffiths C."/>
            <person name="Griffiths M.N.D."/>
            <person name="Hall R."/>
            <person name="Halls K.S."/>
            <person name="Hammond S."/>
            <person name="Harley J.L."/>
            <person name="Hart E.A."/>
            <person name="Heath P.D."/>
            <person name="Heathcott R."/>
            <person name="Holmes S.J."/>
            <person name="Howden P.J."/>
            <person name="Howe K.L."/>
            <person name="Howell G.R."/>
            <person name="Huckle E."/>
            <person name="Humphray S.J."/>
            <person name="Humphries M.D."/>
            <person name="Hunt A.R."/>
            <person name="Johnson C.M."/>
            <person name="Joy A.A."/>
            <person name="Kay M."/>
            <person name="Keenan S.J."/>
            <person name="Kimberley A.M."/>
            <person name="King A."/>
            <person name="Laird G.K."/>
            <person name="Langford C."/>
            <person name="Lawlor S."/>
            <person name="Leongamornlert D.A."/>
            <person name="Leversha M."/>
            <person name="Lloyd C.R."/>
            <person name="Lloyd D.M."/>
            <person name="Loveland J.E."/>
            <person name="Lovell J."/>
            <person name="Martin S."/>
            <person name="Mashreghi-Mohammadi M."/>
            <person name="Maslen G.L."/>
            <person name="Matthews L."/>
            <person name="McCann O.T."/>
            <person name="McLaren S.J."/>
            <person name="McLay K."/>
            <person name="McMurray A."/>
            <person name="Moore M.J.F."/>
            <person name="Mullikin J.C."/>
            <person name="Niblett D."/>
            <person name="Nickerson T."/>
            <person name="Novik K.L."/>
            <person name="Oliver K."/>
            <person name="Overton-Larty E.K."/>
            <person name="Parker A."/>
            <person name="Patel R."/>
            <person name="Pearce A.V."/>
            <person name="Peck A.I."/>
            <person name="Phillimore B.J.C.T."/>
            <person name="Phillips S."/>
            <person name="Plumb R.W."/>
            <person name="Porter K.M."/>
            <person name="Ramsey Y."/>
            <person name="Ranby S.A."/>
            <person name="Rice C.M."/>
            <person name="Ross M.T."/>
            <person name="Searle S.M."/>
            <person name="Sehra H.K."/>
            <person name="Sheridan E."/>
            <person name="Skuce C.D."/>
            <person name="Smith S."/>
            <person name="Smith M."/>
            <person name="Spraggon L."/>
            <person name="Squares S.L."/>
            <person name="Steward C.A."/>
            <person name="Sycamore N."/>
            <person name="Tamlyn-Hall G."/>
            <person name="Tester J."/>
            <person name="Theaker A.J."/>
            <person name="Thomas D.W."/>
            <person name="Thorpe A."/>
            <person name="Tracey A."/>
            <person name="Tromans A."/>
            <person name="Tubby B."/>
            <person name="Wall M."/>
            <person name="Wallis J.M."/>
            <person name="West A.P."/>
            <person name="White S.S."/>
            <person name="Whitehead S.L."/>
            <person name="Whittaker H."/>
            <person name="Wild A."/>
            <person name="Willey D.J."/>
            <person name="Wilmer T.E."/>
            <person name="Wood J.M."/>
            <person name="Wray P.W."/>
            <person name="Wyatt J.C."/>
            <person name="Young L."/>
            <person name="Younger R.M."/>
            <person name="Bentley D.R."/>
            <person name="Coulson A."/>
            <person name="Durbin R.M."/>
            <person name="Hubbard T."/>
            <person name="Sulston J.E."/>
            <person name="Dunham I."/>
            <person name="Rogers J."/>
            <person name="Beck S."/>
        </authorList>
    </citation>
    <scope>NUCLEOTIDE SEQUENCE [LARGE SCALE GENOMIC DNA]</scope>
</reference>
<reference key="4">
    <citation type="submission" date="2005-09" db="EMBL/GenBank/DDBJ databases">
        <authorList>
            <person name="Mural R.J."/>
            <person name="Istrail S."/>
            <person name="Sutton G.G."/>
            <person name="Florea L."/>
            <person name="Halpern A.L."/>
            <person name="Mobarry C.M."/>
            <person name="Lippert R."/>
            <person name="Walenz B."/>
            <person name="Shatkay H."/>
            <person name="Dew I."/>
            <person name="Miller J.R."/>
            <person name="Flanigan M.J."/>
            <person name="Edwards N.J."/>
            <person name="Bolanos R."/>
            <person name="Fasulo D."/>
            <person name="Halldorsson B.V."/>
            <person name="Hannenhalli S."/>
            <person name="Turner R."/>
            <person name="Yooseph S."/>
            <person name="Lu F."/>
            <person name="Nusskern D.R."/>
            <person name="Shue B.C."/>
            <person name="Zheng X.H."/>
            <person name="Zhong F."/>
            <person name="Delcher A.L."/>
            <person name="Huson D.H."/>
            <person name="Kravitz S.A."/>
            <person name="Mouchard L."/>
            <person name="Reinert K."/>
            <person name="Remington K.A."/>
            <person name="Clark A.G."/>
            <person name="Waterman M.S."/>
            <person name="Eichler E.E."/>
            <person name="Adams M.D."/>
            <person name="Hunkapiller M.W."/>
            <person name="Myers E.W."/>
            <person name="Venter J.C."/>
        </authorList>
    </citation>
    <scope>NUCLEOTIDE SEQUENCE [LARGE SCALE GENOMIC DNA]</scope>
</reference>
<reference key="5">
    <citation type="journal article" date="2004" name="Genome Res.">
        <title>The status, quality, and expansion of the NIH full-length cDNA project: the Mammalian Gene Collection (MGC).</title>
        <authorList>
            <consortium name="The MGC Project Team"/>
        </authorList>
    </citation>
    <scope>NUCLEOTIDE SEQUENCE [LARGE SCALE MRNA] (ISOFORM 1)</scope>
    <scope>VARIANT ALA-200</scope>
    <source>
        <tissue>Placenta</tissue>
    </source>
</reference>
<reference key="6">
    <citation type="journal article" date="1998" name="DNA Seq.">
        <title>Computer sequence analysis of human highly conserved zinc finger modules.</title>
        <authorList>
            <person name="Petroni D."/>
            <person name="Bartolini E."/>
            <person name="Chiaramonte R."/>
            <person name="Ottolenghi S."/>
            <person name="Comi P."/>
        </authorList>
    </citation>
    <scope>NUCLEOTIDE SEQUENCE [MRNA] OF 206-538 (ISOFORM 1/2)</scope>
</reference>
<reference key="7">
    <citation type="journal article" date="2008" name="Cancer Res.">
        <title>The previously undescribed ZKSCAN3 (ZNF306) is a novel 'driver' of colorectal cancer progression.</title>
        <authorList>
            <person name="Yang L."/>
            <person name="Hamilton S.R."/>
            <person name="Sood A."/>
            <person name="Kuwai T."/>
            <person name="Ellis L."/>
            <person name="Sanguino A."/>
            <person name="Lopez-Berestein G."/>
            <person name="Boyd D.D."/>
        </authorList>
    </citation>
    <scope>TISSUE SPECIFICITY</scope>
</reference>
<reference key="8">
    <citation type="journal article" date="2008" name="J. Biol. Chem.">
        <title>Unbiased screening for transcriptional targets of ZKSCAN3 identifies integrin beta 4 and vascular endothelial growth factor as downstream targets.</title>
        <authorList>
            <person name="Yang L."/>
            <person name="Zhang L."/>
            <person name="Wu Q."/>
            <person name="Boyd D.D."/>
        </authorList>
    </citation>
    <scope>FUNCTION</scope>
    <scope>SUBCELLULAR LOCATION</scope>
    <scope>DNA-BINDING</scope>
    <scope>INDUCTION</scope>
</reference>
<reference key="9">
    <citation type="journal article" date="2011" name="Oncogene">
        <title>Evidence of a role for the novel zinc-finger transcription factor ZKSCAN3 in modulating Cyclin D2 expression in multiple myeloma.</title>
        <authorList>
            <person name="Yang L."/>
            <person name="Wang H."/>
            <person name="Kornblau S.M."/>
            <person name="Graber D.A."/>
            <person name="Zhang N."/>
            <person name="Matthews J.A."/>
            <person name="Wang M."/>
            <person name="Weber D.M."/>
            <person name="Thomas S.K."/>
            <person name="Shah J.J."/>
            <person name="Zhang L."/>
            <person name="Lu G."/>
            <person name="Zhao M."/>
            <person name="Muddasani R."/>
            <person name="Yoo S.Y."/>
            <person name="Baggerly K.A."/>
            <person name="Orlowski R.Z."/>
        </authorList>
    </citation>
    <scope>FUNCTION</scope>
    <scope>INDUCTION</scope>
</reference>
<reference key="10">
    <citation type="journal article" date="2012" name="Int. J. Biochem. Cell Biol.">
        <title>The zinc finger transcription factor ZKSCAN3 promotes prostate cancer cell migration.</title>
        <authorList>
            <person name="Zhang X."/>
            <person name="Jing Y."/>
            <person name="Qin Y."/>
            <person name="Hunsucker S."/>
            <person name="Meng H."/>
            <person name="Sui J."/>
            <person name="Jiang Y."/>
            <person name="Gao L."/>
            <person name="An G."/>
            <person name="Yang N."/>
            <person name="Orlowski R.Z."/>
            <person name="Yang L."/>
        </authorList>
    </citation>
    <scope>FUNCTION</scope>
    <scope>INDUCTION</scope>
</reference>
<reference key="11">
    <citation type="journal article" date="2013" name="J. Proteome Res.">
        <title>Toward a comprehensive characterization of a human cancer cell phosphoproteome.</title>
        <authorList>
            <person name="Zhou H."/>
            <person name="Di Palma S."/>
            <person name="Preisinger C."/>
            <person name="Peng M."/>
            <person name="Polat A.N."/>
            <person name="Heck A.J."/>
            <person name="Mohammed S."/>
        </authorList>
    </citation>
    <scope>PHOSPHORYLATION [LARGE SCALE ANALYSIS] AT THR-207 AND THR-449</scope>
    <scope>IDENTIFICATION BY MASS SPECTROMETRY [LARGE SCALE ANALYSIS]</scope>
    <source>
        <tissue>Erythroleukemia</tissue>
    </source>
</reference>
<reference key="12">
    <citation type="journal article" date="2013" name="Mol. Cell">
        <title>ZKSCAN3 is a master transcriptional repressor of autophagy.</title>
        <authorList>
            <person name="Chauhan S."/>
            <person name="Goodwin J.G."/>
            <person name="Chauhan S."/>
            <person name="Manyam G."/>
            <person name="Wang J."/>
            <person name="Kamat A.M."/>
            <person name="Boyd D.D."/>
        </authorList>
    </citation>
    <scope>FUNCTION</scope>
    <scope>DNA-BINDING</scope>
    <scope>SUBCELLULAR LOCATION</scope>
</reference>
<reference key="13">
    <citation type="journal article" date="2017" name="Nat. Struct. Mol. Biol.">
        <title>Site-specific mapping of the human SUMO proteome reveals co-modification with phosphorylation.</title>
        <authorList>
            <person name="Hendriks I.A."/>
            <person name="Lyon D."/>
            <person name="Young C."/>
            <person name="Jensen L.J."/>
            <person name="Vertegaal A.C."/>
            <person name="Nielsen M.L."/>
        </authorList>
    </citation>
    <scope>SUMOYLATION [LARGE SCALE ANALYSIS] AT LYS-171</scope>
    <scope>IDENTIFICATION BY MASS SPECTROMETRY [LARGE SCALE ANALYSIS]</scope>
</reference>
<comment type="function">
    <text evidence="7 8 9 10">Transcriptional factor that binds to the consensus sequence 5'-[GT][AG][AGT]GGGG-3' and acts as a repressor of autophagy. Specifically represses expression of genes involved in autophagy and lysosome biogenesis/function such as MAP1LC3B, ULK1 or WIPI2. Associates with chromatin at the ITGB4 and VEGF promoters. Also acts as a transcription activator and promotes cancer cell progression and/or migration in various tumors and myelomas.</text>
</comment>
<comment type="interaction">
    <interactant intactId="EBI-1965777">
        <id>Q9BRR0</id>
    </interactant>
    <interactant intactId="EBI-1054228">
        <id>P41091</id>
        <label>EIF2S3</label>
    </interactant>
    <organismsDiffer>false</organismsDiffer>
    <experiments>3</experiments>
</comment>
<comment type="interaction">
    <interactant intactId="EBI-1965777">
        <id>Q9BRR0</id>
    </interactant>
    <interactant intactId="EBI-10226858">
        <id>Q0VDC6</id>
        <label>FKBP1A</label>
    </interactant>
    <organismsDiffer>false</organismsDiffer>
    <experiments>3</experiments>
</comment>
<comment type="interaction">
    <interactant intactId="EBI-1965777">
        <id>Q9BRR0</id>
    </interactant>
    <interactant intactId="EBI-744302">
        <id>P14136</id>
        <label>GFAP</label>
    </interactant>
    <organismsDiffer>false</organismsDiffer>
    <experiments>3</experiments>
</comment>
<comment type="interaction">
    <interactant intactId="EBI-1965777">
        <id>Q9BRR0</id>
    </interactant>
    <interactant intactId="EBI-5916454">
        <id>A6NEM1</id>
        <label>GOLGA6L9</label>
    </interactant>
    <organismsDiffer>false</organismsDiffer>
    <experiments>3</experiments>
</comment>
<comment type="interaction">
    <interactant intactId="EBI-1965777">
        <id>Q9BRR0</id>
    </interactant>
    <interactant intactId="EBI-356991">
        <id>P54652</id>
        <label>HSPA2</label>
    </interactant>
    <organismsDiffer>false</organismsDiffer>
    <experiments>3</experiments>
</comment>
<comment type="interaction">
    <interactant intactId="EBI-1965777">
        <id>Q9BRR0</id>
    </interactant>
    <interactant intactId="EBI-466029">
        <id>P42858</id>
        <label>HTT</label>
    </interactant>
    <organismsDiffer>false</organismsDiffer>
    <experiments>3</experiments>
</comment>
<comment type="interaction">
    <interactant intactId="EBI-1965777">
        <id>Q9BRR0</id>
    </interactant>
    <interactant intactId="EBI-8638439">
        <id>Q8IYA8</id>
        <label>IHO1</label>
    </interactant>
    <organismsDiffer>false</organismsDiffer>
    <experiments>3</experiments>
</comment>
<comment type="interaction">
    <interactant intactId="EBI-1965777">
        <id>Q9BRR0</id>
    </interactant>
    <interactant intactId="EBI-1055254">
        <id>Q8WXH2</id>
        <label>JPH3</label>
    </interactant>
    <organismsDiffer>false</organismsDiffer>
    <experiments>3</experiments>
</comment>
<comment type="interaction">
    <interactant intactId="EBI-1965777">
        <id>Q9BRR0</id>
    </interactant>
    <interactant intactId="EBI-741037">
        <id>Q9BRK4</id>
        <label>LZTS2</label>
    </interactant>
    <organismsDiffer>false</organismsDiffer>
    <experiments>3</experiments>
</comment>
<comment type="interaction">
    <interactant intactId="EBI-1965777">
        <id>Q9BRR0</id>
    </interactant>
    <interactant intactId="EBI-398437">
        <id>O15151</id>
        <label>MDM4</label>
    </interactant>
    <organismsDiffer>false</organismsDiffer>
    <experiments>3</experiments>
</comment>
<comment type="interaction">
    <interactant intactId="EBI-1965777">
        <id>Q9BRR0</id>
    </interactant>
    <interactant intactId="EBI-16439278">
        <id>Q6FHY5</id>
        <label>MEOX2</label>
    </interactant>
    <organismsDiffer>false</organismsDiffer>
    <experiments>3</experiments>
</comment>
<comment type="interaction">
    <interactant intactId="EBI-1965777">
        <id>Q9BRR0</id>
    </interactant>
    <interactant intactId="EBI-9640281">
        <id>Q5VU43-2</id>
        <label>PDE4DIP</label>
    </interactant>
    <organismsDiffer>false</organismsDiffer>
    <experiments>3</experiments>
</comment>
<comment type="interaction">
    <interactant intactId="EBI-1965777">
        <id>Q9BRR0</id>
    </interactant>
    <interactant intactId="EBI-50433196">
        <id>A0A6Q8PF08</id>
        <label>PMP22</label>
    </interactant>
    <organismsDiffer>false</organismsDiffer>
    <experiments>3</experiments>
</comment>
<comment type="interaction">
    <interactant intactId="EBI-1965777">
        <id>Q9BRR0</id>
    </interactant>
    <interactant intactId="EBI-1053431">
        <id>P49591</id>
        <label>SARS1</label>
    </interactant>
    <organismsDiffer>false</organismsDiffer>
    <experiments>3</experiments>
</comment>
<comment type="interaction">
    <interactant intactId="EBI-1965777">
        <id>Q9BRR0</id>
    </interactant>
    <interactant intactId="EBI-745846">
        <id>P57086</id>
        <label>SCAND1</label>
    </interactant>
    <organismsDiffer>false</organismsDiffer>
    <experiments>3</experiments>
</comment>
<comment type="interaction">
    <interactant intactId="EBI-1965777">
        <id>Q9BRR0</id>
    </interactant>
    <interactant intactId="EBI-355744">
        <id>Q12933</id>
        <label>TRAF2</label>
    </interactant>
    <organismsDiffer>false</organismsDiffer>
    <experiments>3</experiments>
</comment>
<comment type="subcellular location">
    <subcellularLocation>
        <location>Nucleus</location>
    </subcellularLocation>
    <subcellularLocation>
        <location>Cytoplasm</location>
    </subcellularLocation>
    <text>Mainly localizes in the nucleus. Under starvation conditions translocates to the cytoplasm, allowing expression of target genes involved in autophagy and lysosome biogenesis/function.</text>
</comment>
<comment type="alternative products">
    <event type="alternative splicing"/>
    <isoform>
        <id>Q9BRR0-1</id>
        <name>1</name>
        <sequence type="displayed"/>
    </isoform>
    <isoform>
        <id>Q9BRR0-2</id>
        <name>2</name>
        <sequence type="described" ref="VSP_045908"/>
    </isoform>
</comment>
<comment type="induction">
    <text evidence="7 8 9">Overexpressed in various tumors, such as multiple myeloma, colorectal and prostate cancers (at protein level).</text>
</comment>
<comment type="similarity">
    <text evidence="13">Belongs to the krueppel C2H2-type zinc-finger protein family.</text>
</comment>
<sequence length="538" mass="60641">MARELSESTALDAQSTEDQMELLVIKVEEEEAGFPSSPDLGSEGSRERFRGFRYPEAAGPREALSRLRELCRQWLQPEMHSKEQILELLVLEQFLTILPGNLQSWVREQHPESGEEVVVLLEYLERQLDEPAPQVSGVDQGQELLCCKMALLTPAPGSQSSQFQLMKALLKHESVGSQPLQDRVLQVPVLAHGGCCREDKVVASRLTPESQGLLKVEDVALTLTPEWTQQDSSQGNLCRDEKQENHGSLVSLGDEKQTKSRDLPPAEELPEKEHGKISCHLREDIAQIPTCAEAGEQEGRLQRKQKNATGGRRHICHECGKSFAQSSGLSKHRRIHTGEKPYECEECGKAFIGSSALVIHQRVHTGEKPYECEECGKAFSHSSDLIKHQRTHTGEKPYECDDCGKTFSQSCSLLEHHRIHTGEKPYQCSMCGKAFRRSSHLLRHQRIHTGDKNVQEPEQGEAWKSRMESQLENVETPMSYKCNECERSFTQNTGLIEHQKIHTGEKPYQCNACGKGFTRISYLVQHQRSHVGKNILSQ</sequence>
<protein>
    <recommendedName>
        <fullName>Zinc finger protein with KRAB and SCAN domains 3</fullName>
    </recommendedName>
    <alternativeName>
        <fullName>Zinc finger and SCAN domain-containing protein 13</fullName>
    </alternativeName>
    <alternativeName>
        <fullName>Zinc finger protein 306</fullName>
    </alternativeName>
    <alternativeName>
        <fullName>Zinc finger protein 309</fullName>
    </alternativeName>
    <alternativeName>
        <fullName>Zinc finger protein 47 homolog</fullName>
        <shortName>Zf47</shortName>
        <shortName>Zfp-47</shortName>
    </alternativeName>
</protein>